<feature type="chain" id="PRO_0000304857" description="UPF0473 protein SP_0194">
    <location>
        <begin position="1"/>
        <end position="101"/>
    </location>
</feature>
<keyword id="KW-1185">Reference proteome</keyword>
<evidence type="ECO:0000255" key="1">
    <source>
        <dbReference type="HAMAP-Rule" id="MF_01448"/>
    </source>
</evidence>
<proteinExistence type="evidence at protein level"/>
<name>Y194_STRPN</name>
<organism>
    <name type="scientific">Streptococcus pneumoniae serotype 4 (strain ATCC BAA-334 / TIGR4)</name>
    <dbReference type="NCBI Taxonomy" id="170187"/>
    <lineage>
        <taxon>Bacteria</taxon>
        <taxon>Bacillati</taxon>
        <taxon>Bacillota</taxon>
        <taxon>Bacilli</taxon>
        <taxon>Lactobacillales</taxon>
        <taxon>Streptococcaceae</taxon>
        <taxon>Streptococcus</taxon>
    </lineage>
</organism>
<sequence>MSHDHNHDHEERELITLVDEQGNETLFEILLTIDGKEEFGKNYVLLVPVNAEEDEDGQVEIQAYSFIENEDGTEGELQPIPEDSEDEWNMIEEVFNSFMEE</sequence>
<comment type="interaction">
    <interactant intactId="EBI-11704466">
        <id>Q97SX0</id>
    </interactant>
    <interactant intactId="EBI-11704462">
        <id>E7DN96</id>
    </interactant>
    <organismsDiffer>true</organismsDiffer>
    <experiments>2</experiments>
</comment>
<comment type="similarity">
    <text evidence="1">Belongs to the UPF0473 family.</text>
</comment>
<gene>
    <name type="ordered locus">SP_0194</name>
</gene>
<accession>Q97SX0</accession>
<dbReference type="EMBL" id="AE005672">
    <property type="protein sequence ID" value="AAK74374.1"/>
    <property type="molecule type" value="Genomic_DNA"/>
</dbReference>
<dbReference type="PIR" id="A97894">
    <property type="entry name" value="A97894"/>
</dbReference>
<dbReference type="PIR" id="E95022">
    <property type="entry name" value="E95022"/>
</dbReference>
<dbReference type="RefSeq" id="WP_000017620.1">
    <property type="nucleotide sequence ID" value="NZ_CP155539.1"/>
</dbReference>
<dbReference type="IntAct" id="Q97SX0">
    <property type="interactions" value="1"/>
</dbReference>
<dbReference type="PaxDb" id="170187-SP_0194"/>
<dbReference type="EnsemblBacteria" id="AAK74374">
    <property type="protein sequence ID" value="AAK74374"/>
    <property type="gene ID" value="SP_0194"/>
</dbReference>
<dbReference type="KEGG" id="spn:SP_0194"/>
<dbReference type="eggNOG" id="COG3906">
    <property type="taxonomic scope" value="Bacteria"/>
</dbReference>
<dbReference type="PhylomeDB" id="Q97SX0"/>
<dbReference type="BioCyc" id="SPNE170187:G1FZB-201-MONOMER"/>
<dbReference type="Proteomes" id="UP000000585">
    <property type="component" value="Chromosome"/>
</dbReference>
<dbReference type="HAMAP" id="MF_01448">
    <property type="entry name" value="UPF0473"/>
    <property type="match status" value="1"/>
</dbReference>
<dbReference type="InterPro" id="IPR009711">
    <property type="entry name" value="UPF0473"/>
</dbReference>
<dbReference type="NCBIfam" id="NF010215">
    <property type="entry name" value="PRK13678.1-2"/>
    <property type="match status" value="1"/>
</dbReference>
<dbReference type="NCBIfam" id="NF010217">
    <property type="entry name" value="PRK13678.1-4"/>
    <property type="match status" value="1"/>
</dbReference>
<dbReference type="PANTHER" id="PTHR40066">
    <property type="entry name" value="UPF0473 PROTEIN CBO2561/CLC_2432"/>
    <property type="match status" value="1"/>
</dbReference>
<dbReference type="PANTHER" id="PTHR40066:SF1">
    <property type="entry name" value="UPF0473 PROTEIN CBO2561_CLC_2432"/>
    <property type="match status" value="1"/>
</dbReference>
<dbReference type="Pfam" id="PF06949">
    <property type="entry name" value="DUF1292"/>
    <property type="match status" value="1"/>
</dbReference>
<reference key="1">
    <citation type="journal article" date="2001" name="Science">
        <title>Complete genome sequence of a virulent isolate of Streptococcus pneumoniae.</title>
        <authorList>
            <person name="Tettelin H."/>
            <person name="Nelson K.E."/>
            <person name="Paulsen I.T."/>
            <person name="Eisen J.A."/>
            <person name="Read T.D."/>
            <person name="Peterson S.N."/>
            <person name="Heidelberg J.F."/>
            <person name="DeBoy R.T."/>
            <person name="Haft D.H."/>
            <person name="Dodson R.J."/>
            <person name="Durkin A.S."/>
            <person name="Gwinn M.L."/>
            <person name="Kolonay J.F."/>
            <person name="Nelson W.C."/>
            <person name="Peterson J.D."/>
            <person name="Umayam L.A."/>
            <person name="White O."/>
            <person name="Salzberg S.L."/>
            <person name="Lewis M.R."/>
            <person name="Radune D."/>
            <person name="Holtzapple E.K."/>
            <person name="Khouri H.M."/>
            <person name="Wolf A.M."/>
            <person name="Utterback T.R."/>
            <person name="Hansen C.L."/>
            <person name="McDonald L.A."/>
            <person name="Feldblyum T.V."/>
            <person name="Angiuoli S.V."/>
            <person name="Dickinson T."/>
            <person name="Hickey E.K."/>
            <person name="Holt I.E."/>
            <person name="Loftus B.J."/>
            <person name="Yang F."/>
            <person name="Smith H.O."/>
            <person name="Venter J.C."/>
            <person name="Dougherty B.A."/>
            <person name="Morrison D.A."/>
            <person name="Hollingshead S.K."/>
            <person name="Fraser C.M."/>
        </authorList>
    </citation>
    <scope>NUCLEOTIDE SEQUENCE [LARGE SCALE GENOMIC DNA]</scope>
    <source>
        <strain>ATCC BAA-334 / TIGR4</strain>
    </source>
</reference>
<protein>
    <recommendedName>
        <fullName evidence="1">UPF0473 protein SP_0194</fullName>
    </recommendedName>
</protein>